<comment type="function">
    <text evidence="1">Catalyzes the NADPH-dependent rearrangement and reduction of 1-deoxy-D-xylulose-5-phosphate (DXP) to 2-C-methyl-D-erythritol 4-phosphate (MEP).</text>
</comment>
<comment type="catalytic activity">
    <reaction evidence="1">
        <text>2-C-methyl-D-erythritol 4-phosphate + NADP(+) = 1-deoxy-D-xylulose 5-phosphate + NADPH + H(+)</text>
        <dbReference type="Rhea" id="RHEA:13717"/>
        <dbReference type="ChEBI" id="CHEBI:15378"/>
        <dbReference type="ChEBI" id="CHEBI:57783"/>
        <dbReference type="ChEBI" id="CHEBI:57792"/>
        <dbReference type="ChEBI" id="CHEBI:58262"/>
        <dbReference type="ChEBI" id="CHEBI:58349"/>
        <dbReference type="EC" id="1.1.1.267"/>
    </reaction>
    <physiologicalReaction direction="right-to-left" evidence="1">
        <dbReference type="Rhea" id="RHEA:13719"/>
    </physiologicalReaction>
</comment>
<comment type="cofactor">
    <cofactor evidence="1">
        <name>Mg(2+)</name>
        <dbReference type="ChEBI" id="CHEBI:18420"/>
    </cofactor>
    <cofactor evidence="1">
        <name>Mn(2+)</name>
        <dbReference type="ChEBI" id="CHEBI:29035"/>
    </cofactor>
</comment>
<comment type="pathway">
    <text evidence="1">Isoprenoid biosynthesis; isopentenyl diphosphate biosynthesis via DXP pathway; isopentenyl diphosphate from 1-deoxy-D-xylulose 5-phosphate: step 1/6.</text>
</comment>
<comment type="similarity">
    <text evidence="1">Belongs to the DXR family.</text>
</comment>
<reference key="1">
    <citation type="journal article" date="2006" name="J. Bacteriol.">
        <title>Comparison of the genome sequence of the poultry pathogen Bordetella avium with those of B. bronchiseptica, B. pertussis, and B. parapertussis reveals extensive diversity in surface structures associated with host interaction.</title>
        <authorList>
            <person name="Sebaihia M."/>
            <person name="Preston A."/>
            <person name="Maskell D.J."/>
            <person name="Kuzmiak H."/>
            <person name="Connell T.D."/>
            <person name="King N.D."/>
            <person name="Orndorff P.E."/>
            <person name="Miyamoto D.M."/>
            <person name="Thomson N.R."/>
            <person name="Harris D."/>
            <person name="Goble A."/>
            <person name="Lord A."/>
            <person name="Murphy L."/>
            <person name="Quail M.A."/>
            <person name="Rutter S."/>
            <person name="Squares R."/>
            <person name="Squares S."/>
            <person name="Woodward J."/>
            <person name="Parkhill J."/>
            <person name="Temple L.M."/>
        </authorList>
    </citation>
    <scope>NUCLEOTIDE SEQUENCE [LARGE SCALE GENOMIC DNA]</scope>
    <source>
        <strain>197N</strain>
    </source>
</reference>
<protein>
    <recommendedName>
        <fullName evidence="1">1-deoxy-D-xylulose 5-phosphate reductoisomerase</fullName>
        <shortName evidence="1">DXP reductoisomerase</shortName>
        <ecNumber evidence="1">1.1.1.267</ecNumber>
    </recommendedName>
    <alternativeName>
        <fullName evidence="1">1-deoxyxylulose-5-phosphate reductoisomerase</fullName>
    </alternativeName>
    <alternativeName>
        <fullName evidence="1">2-C-methyl-D-erythritol 4-phosphate synthase</fullName>
    </alternativeName>
</protein>
<sequence length="399" mass="42312">MSGFQRIAVLGSTGSIGDSTLDVIARYPERFGVYALSAFSRMDKLAAQALATGAAVVVVPDNNAATRFRQAWSPSRALPEIRVGAQALADTAADAGCDTVMAAIVGIAGLPAALAAAQSGKRVLLANKEALVAAGSIFMSAVRQSGAELLPIDSEHNAIFQCLPQGERAGAPSTPAKTVRKLILTASGGPFRRHSPEDLQDVTPDQACAHPNWSMGRKISVDSATMLNKGLEVIEAHWLFAMPADRIEVLIHPQSVVHSLVEYDDGSVLAQMGQPDMRTPISYGLGFPERLDAGVSPLDLAKWGRLDFETPDLERFPCLRLSYEALRAGQAACVALNAANEIAVAAFLEGRLPYPWIARVIDAALEWQAGRPSVTLDHLTDVLALDAQVRAYAGNLGLA</sequence>
<accession>Q2L155</accession>
<evidence type="ECO:0000255" key="1">
    <source>
        <dbReference type="HAMAP-Rule" id="MF_00183"/>
    </source>
</evidence>
<name>DXR_BORA1</name>
<organism>
    <name type="scientific">Bordetella avium (strain 197N)</name>
    <dbReference type="NCBI Taxonomy" id="360910"/>
    <lineage>
        <taxon>Bacteria</taxon>
        <taxon>Pseudomonadati</taxon>
        <taxon>Pseudomonadota</taxon>
        <taxon>Betaproteobacteria</taxon>
        <taxon>Burkholderiales</taxon>
        <taxon>Alcaligenaceae</taxon>
        <taxon>Bordetella</taxon>
    </lineage>
</organism>
<dbReference type="EC" id="1.1.1.267" evidence="1"/>
<dbReference type="EMBL" id="AM167904">
    <property type="protein sequence ID" value="CAJ49348.1"/>
    <property type="molecule type" value="Genomic_DNA"/>
</dbReference>
<dbReference type="RefSeq" id="WP_012417409.1">
    <property type="nucleotide sequence ID" value="NC_010645.1"/>
</dbReference>
<dbReference type="SMR" id="Q2L155"/>
<dbReference type="STRING" id="360910.BAV1740"/>
<dbReference type="GeneID" id="92935199"/>
<dbReference type="KEGG" id="bav:BAV1740"/>
<dbReference type="eggNOG" id="COG0743">
    <property type="taxonomic scope" value="Bacteria"/>
</dbReference>
<dbReference type="HOGENOM" id="CLU_035714_4_0_4"/>
<dbReference type="OrthoDB" id="9806546at2"/>
<dbReference type="UniPathway" id="UPA00056">
    <property type="reaction ID" value="UER00092"/>
</dbReference>
<dbReference type="Proteomes" id="UP000001977">
    <property type="component" value="Chromosome"/>
</dbReference>
<dbReference type="GO" id="GO:0030604">
    <property type="term" value="F:1-deoxy-D-xylulose-5-phosphate reductoisomerase activity"/>
    <property type="evidence" value="ECO:0007669"/>
    <property type="project" value="UniProtKB-UniRule"/>
</dbReference>
<dbReference type="GO" id="GO:0030145">
    <property type="term" value="F:manganese ion binding"/>
    <property type="evidence" value="ECO:0007669"/>
    <property type="project" value="TreeGrafter"/>
</dbReference>
<dbReference type="GO" id="GO:0070402">
    <property type="term" value="F:NADPH binding"/>
    <property type="evidence" value="ECO:0007669"/>
    <property type="project" value="InterPro"/>
</dbReference>
<dbReference type="GO" id="GO:0051484">
    <property type="term" value="P:isopentenyl diphosphate biosynthetic process, methylerythritol 4-phosphate pathway involved in terpenoid biosynthetic process"/>
    <property type="evidence" value="ECO:0007669"/>
    <property type="project" value="TreeGrafter"/>
</dbReference>
<dbReference type="FunFam" id="3.40.50.720:FF:000045">
    <property type="entry name" value="1-deoxy-D-xylulose 5-phosphate reductoisomerase"/>
    <property type="match status" value="1"/>
</dbReference>
<dbReference type="Gene3D" id="1.10.1740.10">
    <property type="match status" value="1"/>
</dbReference>
<dbReference type="Gene3D" id="3.40.50.720">
    <property type="entry name" value="NAD(P)-binding Rossmann-like Domain"/>
    <property type="match status" value="1"/>
</dbReference>
<dbReference type="HAMAP" id="MF_00183">
    <property type="entry name" value="DXP_reductoisom"/>
    <property type="match status" value="1"/>
</dbReference>
<dbReference type="InterPro" id="IPR003821">
    <property type="entry name" value="DXP_reductoisomerase"/>
</dbReference>
<dbReference type="InterPro" id="IPR013644">
    <property type="entry name" value="DXP_reductoisomerase_C"/>
</dbReference>
<dbReference type="InterPro" id="IPR013512">
    <property type="entry name" value="DXP_reductoisomerase_N"/>
</dbReference>
<dbReference type="InterPro" id="IPR026877">
    <property type="entry name" value="DXPR_C"/>
</dbReference>
<dbReference type="InterPro" id="IPR036169">
    <property type="entry name" value="DXPR_C_sf"/>
</dbReference>
<dbReference type="InterPro" id="IPR036291">
    <property type="entry name" value="NAD(P)-bd_dom_sf"/>
</dbReference>
<dbReference type="NCBIfam" id="TIGR00243">
    <property type="entry name" value="Dxr"/>
    <property type="match status" value="1"/>
</dbReference>
<dbReference type="NCBIfam" id="NF009114">
    <property type="entry name" value="PRK12464.1"/>
    <property type="match status" value="1"/>
</dbReference>
<dbReference type="PANTHER" id="PTHR30525">
    <property type="entry name" value="1-DEOXY-D-XYLULOSE 5-PHOSPHATE REDUCTOISOMERASE"/>
    <property type="match status" value="1"/>
</dbReference>
<dbReference type="PANTHER" id="PTHR30525:SF0">
    <property type="entry name" value="1-DEOXY-D-XYLULOSE 5-PHOSPHATE REDUCTOISOMERASE, CHLOROPLASTIC"/>
    <property type="match status" value="1"/>
</dbReference>
<dbReference type="Pfam" id="PF08436">
    <property type="entry name" value="DXP_redisom_C"/>
    <property type="match status" value="1"/>
</dbReference>
<dbReference type="Pfam" id="PF02670">
    <property type="entry name" value="DXP_reductoisom"/>
    <property type="match status" value="1"/>
</dbReference>
<dbReference type="Pfam" id="PF13288">
    <property type="entry name" value="DXPR_C"/>
    <property type="match status" value="1"/>
</dbReference>
<dbReference type="PIRSF" id="PIRSF006205">
    <property type="entry name" value="Dxp_reductismrs"/>
    <property type="match status" value="1"/>
</dbReference>
<dbReference type="SUPFAM" id="SSF69055">
    <property type="entry name" value="1-deoxy-D-xylulose-5-phosphate reductoisomerase, C-terminal domain"/>
    <property type="match status" value="1"/>
</dbReference>
<dbReference type="SUPFAM" id="SSF55347">
    <property type="entry name" value="Glyceraldehyde-3-phosphate dehydrogenase-like, C-terminal domain"/>
    <property type="match status" value="1"/>
</dbReference>
<dbReference type="SUPFAM" id="SSF51735">
    <property type="entry name" value="NAD(P)-binding Rossmann-fold domains"/>
    <property type="match status" value="1"/>
</dbReference>
<feature type="chain" id="PRO_1000020220" description="1-deoxy-D-xylulose 5-phosphate reductoisomerase">
    <location>
        <begin position="1"/>
        <end position="399"/>
    </location>
</feature>
<feature type="binding site" evidence="1">
    <location>
        <position position="13"/>
    </location>
    <ligand>
        <name>NADPH</name>
        <dbReference type="ChEBI" id="CHEBI:57783"/>
    </ligand>
</feature>
<feature type="binding site" evidence="1">
    <location>
        <position position="14"/>
    </location>
    <ligand>
        <name>NADPH</name>
        <dbReference type="ChEBI" id="CHEBI:57783"/>
    </ligand>
</feature>
<feature type="binding site" evidence="1">
    <location>
        <position position="15"/>
    </location>
    <ligand>
        <name>NADPH</name>
        <dbReference type="ChEBI" id="CHEBI:57783"/>
    </ligand>
</feature>
<feature type="binding site" evidence="1">
    <location>
        <position position="16"/>
    </location>
    <ligand>
        <name>NADPH</name>
        <dbReference type="ChEBI" id="CHEBI:57783"/>
    </ligand>
</feature>
<feature type="binding site" evidence="1">
    <location>
        <position position="127"/>
    </location>
    <ligand>
        <name>NADPH</name>
        <dbReference type="ChEBI" id="CHEBI:57783"/>
    </ligand>
</feature>
<feature type="binding site" evidence="1">
    <location>
        <position position="128"/>
    </location>
    <ligand>
        <name>1-deoxy-D-xylulose 5-phosphate</name>
        <dbReference type="ChEBI" id="CHEBI:57792"/>
    </ligand>
</feature>
<feature type="binding site" evidence="1">
    <location>
        <position position="129"/>
    </location>
    <ligand>
        <name>NADPH</name>
        <dbReference type="ChEBI" id="CHEBI:57783"/>
    </ligand>
</feature>
<feature type="binding site" evidence="1">
    <location>
        <position position="153"/>
    </location>
    <ligand>
        <name>Mn(2+)</name>
        <dbReference type="ChEBI" id="CHEBI:29035"/>
    </ligand>
</feature>
<feature type="binding site" evidence="1">
    <location>
        <position position="154"/>
    </location>
    <ligand>
        <name>1-deoxy-D-xylulose 5-phosphate</name>
        <dbReference type="ChEBI" id="CHEBI:57792"/>
    </ligand>
</feature>
<feature type="binding site" evidence="1">
    <location>
        <position position="155"/>
    </location>
    <ligand>
        <name>1-deoxy-D-xylulose 5-phosphate</name>
        <dbReference type="ChEBI" id="CHEBI:57792"/>
    </ligand>
</feature>
<feature type="binding site" evidence="1">
    <location>
        <position position="155"/>
    </location>
    <ligand>
        <name>Mn(2+)</name>
        <dbReference type="ChEBI" id="CHEBI:29035"/>
    </ligand>
</feature>
<feature type="binding site" evidence="1">
    <location>
        <position position="187"/>
    </location>
    <ligand>
        <name>1-deoxy-D-xylulose 5-phosphate</name>
        <dbReference type="ChEBI" id="CHEBI:57792"/>
    </ligand>
</feature>
<feature type="binding site" evidence="1">
    <location>
        <position position="210"/>
    </location>
    <ligand>
        <name>1-deoxy-D-xylulose 5-phosphate</name>
        <dbReference type="ChEBI" id="CHEBI:57792"/>
    </ligand>
</feature>
<feature type="binding site" evidence="1">
    <location>
        <position position="216"/>
    </location>
    <ligand>
        <name>NADPH</name>
        <dbReference type="ChEBI" id="CHEBI:57783"/>
    </ligand>
</feature>
<feature type="binding site" evidence="1">
    <location>
        <position position="223"/>
    </location>
    <ligand>
        <name>1-deoxy-D-xylulose 5-phosphate</name>
        <dbReference type="ChEBI" id="CHEBI:57792"/>
    </ligand>
</feature>
<feature type="binding site" evidence="1">
    <location>
        <position position="228"/>
    </location>
    <ligand>
        <name>1-deoxy-D-xylulose 5-phosphate</name>
        <dbReference type="ChEBI" id="CHEBI:57792"/>
    </ligand>
</feature>
<feature type="binding site" evidence="1">
    <location>
        <position position="229"/>
    </location>
    <ligand>
        <name>1-deoxy-D-xylulose 5-phosphate</name>
        <dbReference type="ChEBI" id="CHEBI:57792"/>
    </ligand>
</feature>
<feature type="binding site" evidence="1">
    <location>
        <position position="232"/>
    </location>
    <ligand>
        <name>1-deoxy-D-xylulose 5-phosphate</name>
        <dbReference type="ChEBI" id="CHEBI:57792"/>
    </ligand>
</feature>
<feature type="binding site" evidence="1">
    <location>
        <position position="232"/>
    </location>
    <ligand>
        <name>Mn(2+)</name>
        <dbReference type="ChEBI" id="CHEBI:29035"/>
    </ligand>
</feature>
<gene>
    <name evidence="1" type="primary">dxr</name>
    <name type="ordered locus">BAV1740</name>
</gene>
<proteinExistence type="inferred from homology"/>
<keyword id="KW-0414">Isoprene biosynthesis</keyword>
<keyword id="KW-0464">Manganese</keyword>
<keyword id="KW-0479">Metal-binding</keyword>
<keyword id="KW-0521">NADP</keyword>
<keyword id="KW-0560">Oxidoreductase</keyword>
<keyword id="KW-1185">Reference proteome</keyword>